<proteinExistence type="inferred from homology"/>
<gene>
    <name evidence="1" type="primary">lipA</name>
    <name type="ordered locus">MLBr00858</name>
</gene>
<accession>B8ZQJ9</accession>
<reference key="1">
    <citation type="journal article" date="2009" name="Nat. Genet.">
        <title>Comparative genomic and phylogeographic analysis of Mycobacterium leprae.</title>
        <authorList>
            <person name="Monot M."/>
            <person name="Honore N."/>
            <person name="Garnier T."/>
            <person name="Zidane N."/>
            <person name="Sherafi D."/>
            <person name="Paniz-Mondolfi A."/>
            <person name="Matsuoka M."/>
            <person name="Taylor G.M."/>
            <person name="Donoghue H.D."/>
            <person name="Bouwman A."/>
            <person name="Mays S."/>
            <person name="Watson C."/>
            <person name="Lockwood D."/>
            <person name="Khamispour A."/>
            <person name="Dowlati Y."/>
            <person name="Jianping S."/>
            <person name="Rea T.H."/>
            <person name="Vera-Cabrera L."/>
            <person name="Stefani M.M."/>
            <person name="Banu S."/>
            <person name="Macdonald M."/>
            <person name="Sapkota B.R."/>
            <person name="Spencer J.S."/>
            <person name="Thomas J."/>
            <person name="Harshman K."/>
            <person name="Singh P."/>
            <person name="Busso P."/>
            <person name="Gattiker A."/>
            <person name="Rougemont J."/>
            <person name="Brennan P.J."/>
            <person name="Cole S.T."/>
        </authorList>
    </citation>
    <scope>NUCLEOTIDE SEQUENCE [LARGE SCALE GENOMIC DNA]</scope>
    <source>
        <strain>Br4923</strain>
    </source>
</reference>
<dbReference type="EC" id="2.8.1.8" evidence="1"/>
<dbReference type="EMBL" id="FM211192">
    <property type="protein sequence ID" value="CAR70953.1"/>
    <property type="molecule type" value="Genomic_DNA"/>
</dbReference>
<dbReference type="SMR" id="B8ZQJ9"/>
<dbReference type="KEGG" id="mlb:MLBr00858"/>
<dbReference type="HOGENOM" id="CLU_033144_2_1_11"/>
<dbReference type="UniPathway" id="UPA00538">
    <property type="reaction ID" value="UER00593"/>
</dbReference>
<dbReference type="Proteomes" id="UP000006900">
    <property type="component" value="Chromosome"/>
</dbReference>
<dbReference type="GO" id="GO:0005737">
    <property type="term" value="C:cytoplasm"/>
    <property type="evidence" value="ECO:0007669"/>
    <property type="project" value="UniProtKB-SubCell"/>
</dbReference>
<dbReference type="GO" id="GO:0051539">
    <property type="term" value="F:4 iron, 4 sulfur cluster binding"/>
    <property type="evidence" value="ECO:0007669"/>
    <property type="project" value="UniProtKB-UniRule"/>
</dbReference>
<dbReference type="GO" id="GO:0016992">
    <property type="term" value="F:lipoate synthase activity"/>
    <property type="evidence" value="ECO:0007669"/>
    <property type="project" value="UniProtKB-UniRule"/>
</dbReference>
<dbReference type="GO" id="GO:0046872">
    <property type="term" value="F:metal ion binding"/>
    <property type="evidence" value="ECO:0007669"/>
    <property type="project" value="UniProtKB-KW"/>
</dbReference>
<dbReference type="CDD" id="cd01335">
    <property type="entry name" value="Radical_SAM"/>
    <property type="match status" value="1"/>
</dbReference>
<dbReference type="FunFam" id="3.20.20.70:FF:000116">
    <property type="entry name" value="Lipoyl synthase"/>
    <property type="match status" value="1"/>
</dbReference>
<dbReference type="Gene3D" id="3.20.20.70">
    <property type="entry name" value="Aldolase class I"/>
    <property type="match status" value="1"/>
</dbReference>
<dbReference type="HAMAP" id="MF_00206">
    <property type="entry name" value="Lipoyl_synth"/>
    <property type="match status" value="1"/>
</dbReference>
<dbReference type="InterPro" id="IPR013785">
    <property type="entry name" value="Aldolase_TIM"/>
</dbReference>
<dbReference type="InterPro" id="IPR006638">
    <property type="entry name" value="Elp3/MiaA/NifB-like_rSAM"/>
</dbReference>
<dbReference type="InterPro" id="IPR031691">
    <property type="entry name" value="LIAS_N"/>
</dbReference>
<dbReference type="InterPro" id="IPR003698">
    <property type="entry name" value="Lipoyl_synth"/>
</dbReference>
<dbReference type="InterPro" id="IPR007197">
    <property type="entry name" value="rSAM"/>
</dbReference>
<dbReference type="NCBIfam" id="TIGR00510">
    <property type="entry name" value="lipA"/>
    <property type="match status" value="1"/>
</dbReference>
<dbReference type="NCBIfam" id="NF004019">
    <property type="entry name" value="PRK05481.1"/>
    <property type="match status" value="1"/>
</dbReference>
<dbReference type="NCBIfam" id="NF009544">
    <property type="entry name" value="PRK12928.1"/>
    <property type="match status" value="1"/>
</dbReference>
<dbReference type="PANTHER" id="PTHR10949">
    <property type="entry name" value="LIPOYL SYNTHASE"/>
    <property type="match status" value="1"/>
</dbReference>
<dbReference type="PANTHER" id="PTHR10949:SF0">
    <property type="entry name" value="LIPOYL SYNTHASE, MITOCHONDRIAL"/>
    <property type="match status" value="1"/>
</dbReference>
<dbReference type="Pfam" id="PF16881">
    <property type="entry name" value="LIAS_N"/>
    <property type="match status" value="1"/>
</dbReference>
<dbReference type="Pfam" id="PF04055">
    <property type="entry name" value="Radical_SAM"/>
    <property type="match status" value="1"/>
</dbReference>
<dbReference type="PIRSF" id="PIRSF005963">
    <property type="entry name" value="Lipoyl_synth"/>
    <property type="match status" value="1"/>
</dbReference>
<dbReference type="SFLD" id="SFLDF00271">
    <property type="entry name" value="lipoyl_synthase"/>
    <property type="match status" value="1"/>
</dbReference>
<dbReference type="SFLD" id="SFLDG01058">
    <property type="entry name" value="lipoyl_synthase_like"/>
    <property type="match status" value="1"/>
</dbReference>
<dbReference type="SMART" id="SM00729">
    <property type="entry name" value="Elp3"/>
    <property type="match status" value="1"/>
</dbReference>
<dbReference type="SUPFAM" id="SSF102114">
    <property type="entry name" value="Radical SAM enzymes"/>
    <property type="match status" value="1"/>
</dbReference>
<dbReference type="PROSITE" id="PS51918">
    <property type="entry name" value="RADICAL_SAM"/>
    <property type="match status" value="1"/>
</dbReference>
<organism>
    <name type="scientific">Mycobacterium leprae (strain Br4923)</name>
    <dbReference type="NCBI Taxonomy" id="561304"/>
    <lineage>
        <taxon>Bacteria</taxon>
        <taxon>Bacillati</taxon>
        <taxon>Actinomycetota</taxon>
        <taxon>Actinomycetes</taxon>
        <taxon>Mycobacteriales</taxon>
        <taxon>Mycobacteriaceae</taxon>
        <taxon>Mycobacterium</taxon>
    </lineage>
</organism>
<feature type="chain" id="PRO_1000124642" description="Lipoyl synthase">
    <location>
        <begin position="1"/>
        <end position="314"/>
    </location>
</feature>
<feature type="domain" description="Radical SAM core" evidence="2">
    <location>
        <begin position="67"/>
        <end position="281"/>
    </location>
</feature>
<feature type="binding site" evidence="1">
    <location>
        <position position="55"/>
    </location>
    <ligand>
        <name>[4Fe-4S] cluster</name>
        <dbReference type="ChEBI" id="CHEBI:49883"/>
        <label>1</label>
    </ligand>
</feature>
<feature type="binding site" evidence="1">
    <location>
        <position position="60"/>
    </location>
    <ligand>
        <name>[4Fe-4S] cluster</name>
        <dbReference type="ChEBI" id="CHEBI:49883"/>
        <label>1</label>
    </ligand>
</feature>
<feature type="binding site" evidence="1">
    <location>
        <position position="66"/>
    </location>
    <ligand>
        <name>[4Fe-4S] cluster</name>
        <dbReference type="ChEBI" id="CHEBI:49883"/>
        <label>1</label>
    </ligand>
</feature>
<feature type="binding site" evidence="1">
    <location>
        <position position="81"/>
    </location>
    <ligand>
        <name>[4Fe-4S] cluster</name>
        <dbReference type="ChEBI" id="CHEBI:49883"/>
        <label>2</label>
        <note>4Fe-4S-S-AdoMet</note>
    </ligand>
</feature>
<feature type="binding site" evidence="1">
    <location>
        <position position="85"/>
    </location>
    <ligand>
        <name>[4Fe-4S] cluster</name>
        <dbReference type="ChEBI" id="CHEBI:49883"/>
        <label>2</label>
        <note>4Fe-4S-S-AdoMet</note>
    </ligand>
</feature>
<feature type="binding site" evidence="1">
    <location>
        <position position="88"/>
    </location>
    <ligand>
        <name>[4Fe-4S] cluster</name>
        <dbReference type="ChEBI" id="CHEBI:49883"/>
        <label>2</label>
        <note>4Fe-4S-S-AdoMet</note>
    </ligand>
</feature>
<feature type="binding site" evidence="1">
    <location>
        <position position="292"/>
    </location>
    <ligand>
        <name>[4Fe-4S] cluster</name>
        <dbReference type="ChEBI" id="CHEBI:49883"/>
        <label>1</label>
    </ligand>
</feature>
<evidence type="ECO:0000255" key="1">
    <source>
        <dbReference type="HAMAP-Rule" id="MF_00206"/>
    </source>
</evidence>
<evidence type="ECO:0000255" key="2">
    <source>
        <dbReference type="PROSITE-ProRule" id="PRU01266"/>
    </source>
</evidence>
<comment type="function">
    <text evidence="1">Catalyzes the radical-mediated insertion of two sulfur atoms into the C-6 and C-8 positions of the octanoyl moiety bound to the lipoyl domains of lipoate-dependent enzymes, thereby converting the octanoylated domains into lipoylated derivatives.</text>
</comment>
<comment type="catalytic activity">
    <reaction evidence="1">
        <text>[[Fe-S] cluster scaffold protein carrying a second [4Fe-4S](2+) cluster] + N(6)-octanoyl-L-lysyl-[protein] + 2 oxidized [2Fe-2S]-[ferredoxin] + 2 S-adenosyl-L-methionine + 4 H(+) = [[Fe-S] cluster scaffold protein] + N(6)-[(R)-dihydrolipoyl]-L-lysyl-[protein] + 4 Fe(3+) + 2 hydrogen sulfide + 2 5'-deoxyadenosine + 2 L-methionine + 2 reduced [2Fe-2S]-[ferredoxin]</text>
        <dbReference type="Rhea" id="RHEA:16585"/>
        <dbReference type="Rhea" id="RHEA-COMP:9928"/>
        <dbReference type="Rhea" id="RHEA-COMP:10000"/>
        <dbReference type="Rhea" id="RHEA-COMP:10001"/>
        <dbReference type="Rhea" id="RHEA-COMP:10475"/>
        <dbReference type="Rhea" id="RHEA-COMP:14568"/>
        <dbReference type="Rhea" id="RHEA-COMP:14569"/>
        <dbReference type="ChEBI" id="CHEBI:15378"/>
        <dbReference type="ChEBI" id="CHEBI:17319"/>
        <dbReference type="ChEBI" id="CHEBI:29034"/>
        <dbReference type="ChEBI" id="CHEBI:29919"/>
        <dbReference type="ChEBI" id="CHEBI:33722"/>
        <dbReference type="ChEBI" id="CHEBI:33737"/>
        <dbReference type="ChEBI" id="CHEBI:33738"/>
        <dbReference type="ChEBI" id="CHEBI:57844"/>
        <dbReference type="ChEBI" id="CHEBI:59789"/>
        <dbReference type="ChEBI" id="CHEBI:78809"/>
        <dbReference type="ChEBI" id="CHEBI:83100"/>
        <dbReference type="EC" id="2.8.1.8"/>
    </reaction>
</comment>
<comment type="cofactor">
    <cofactor evidence="1">
        <name>[4Fe-4S] cluster</name>
        <dbReference type="ChEBI" id="CHEBI:49883"/>
    </cofactor>
    <text evidence="1">Binds 2 [4Fe-4S] clusters per subunit. One cluster is coordinated with 3 cysteines and an exchangeable S-adenosyl-L-methionine.</text>
</comment>
<comment type="pathway">
    <text evidence="1">Protein modification; protein lipoylation via endogenous pathway; protein N(6)-(lipoyl)lysine from octanoyl-[acyl-carrier-protein]: step 2/2.</text>
</comment>
<comment type="subcellular location">
    <subcellularLocation>
        <location evidence="1">Cytoplasm</location>
    </subcellularLocation>
</comment>
<comment type="similarity">
    <text evidence="1">Belongs to the radical SAM superfamily. Lipoyl synthase family.</text>
</comment>
<sequence length="314" mass="35120">MTVAPEDCRLLRLEVRNAQTPIERKPPWIKTRARMGPEYTALKNLVRRVALHTVCEEAGCPNIFECWEDREATFLIGGDQCTRRCDFCQIDTGKPAALDRDEPRRVAESVQTMGLRYTTVTGVARDDLPDGGAWLYATTVRAIKELNPSTGVELLIPDFNGQPARLAEVFDSRPQVLAHNVETVPRIFKRIRPAFTYQRSLDVLTAAREAGLVTKSNLILGLGETADEVRTALADLRKTGCDIVTITQYLRPSMRHHPVERWVRPEEFVEYTQYAEGLGFSGVLGGPLVRSSYRAGRLYEQAAGTRTVGTSVSR</sequence>
<name>LIPA_MYCLB</name>
<protein>
    <recommendedName>
        <fullName evidence="1">Lipoyl synthase</fullName>
        <ecNumber evidence="1">2.8.1.8</ecNumber>
    </recommendedName>
    <alternativeName>
        <fullName evidence="1">Lip-syn</fullName>
        <shortName evidence="1">LS</shortName>
    </alternativeName>
    <alternativeName>
        <fullName evidence="1">Lipoate synthase</fullName>
    </alternativeName>
    <alternativeName>
        <fullName evidence="1">Lipoic acid synthase</fullName>
    </alternativeName>
    <alternativeName>
        <fullName evidence="1">Sulfur insertion protein LipA</fullName>
    </alternativeName>
</protein>
<keyword id="KW-0004">4Fe-4S</keyword>
<keyword id="KW-0963">Cytoplasm</keyword>
<keyword id="KW-0408">Iron</keyword>
<keyword id="KW-0411">Iron-sulfur</keyword>
<keyword id="KW-0479">Metal-binding</keyword>
<keyword id="KW-0949">S-adenosyl-L-methionine</keyword>
<keyword id="KW-0808">Transferase</keyword>